<keyword id="KW-0520">NAD</keyword>
<keyword id="KW-0560">Oxidoreductase</keyword>
<proteinExistence type="inferred from homology"/>
<comment type="catalytic activity">
    <reaction evidence="2">
        <text>a primary alcohol + NAD(+) = an aldehyde + NADH + H(+)</text>
        <dbReference type="Rhea" id="RHEA:10736"/>
        <dbReference type="ChEBI" id="CHEBI:15378"/>
        <dbReference type="ChEBI" id="CHEBI:15734"/>
        <dbReference type="ChEBI" id="CHEBI:17478"/>
        <dbReference type="ChEBI" id="CHEBI:57540"/>
        <dbReference type="ChEBI" id="CHEBI:57945"/>
        <dbReference type="EC" id="1.1.1.1"/>
    </reaction>
</comment>
<comment type="catalytic activity">
    <reaction evidence="2">
        <text>a secondary alcohol + NAD(+) = a ketone + NADH + H(+)</text>
        <dbReference type="Rhea" id="RHEA:10740"/>
        <dbReference type="ChEBI" id="CHEBI:15378"/>
        <dbReference type="ChEBI" id="CHEBI:17087"/>
        <dbReference type="ChEBI" id="CHEBI:35681"/>
        <dbReference type="ChEBI" id="CHEBI:57540"/>
        <dbReference type="ChEBI" id="CHEBI:57945"/>
        <dbReference type="EC" id="1.1.1.1"/>
    </reaction>
</comment>
<comment type="subunit">
    <text>Homodimer.</text>
</comment>
<comment type="similarity">
    <text evidence="3">Belongs to the short-chain dehydrogenases/reductases (SDR) family.</text>
</comment>
<dbReference type="EC" id="1.1.1.1"/>
<dbReference type="EMBL" id="Z30195">
    <property type="protein sequence ID" value="CAA82927.1"/>
    <property type="molecule type" value="Genomic_DNA"/>
</dbReference>
<dbReference type="PIR" id="S46935">
    <property type="entry name" value="S46935"/>
</dbReference>
<dbReference type="SMR" id="P48815"/>
<dbReference type="OrthoDB" id="417891at2759"/>
<dbReference type="GO" id="GO:0005737">
    <property type="term" value="C:cytoplasm"/>
    <property type="evidence" value="ECO:0007669"/>
    <property type="project" value="TreeGrafter"/>
</dbReference>
<dbReference type="GO" id="GO:0004022">
    <property type="term" value="F:alcohol dehydrogenase (NAD+) activity"/>
    <property type="evidence" value="ECO:0000314"/>
    <property type="project" value="UniProtKB"/>
</dbReference>
<dbReference type="CDD" id="cd05323">
    <property type="entry name" value="ADH_SDR_c_like"/>
    <property type="match status" value="1"/>
</dbReference>
<dbReference type="FunFam" id="3.40.50.720:FF:000149">
    <property type="entry name" value="15-hydroxyprostaglandin dehydrogenase [NAD(+)]"/>
    <property type="match status" value="1"/>
</dbReference>
<dbReference type="Gene3D" id="3.40.50.720">
    <property type="entry name" value="NAD(P)-binding Rossmann-like Domain"/>
    <property type="match status" value="1"/>
</dbReference>
<dbReference type="InterPro" id="IPR002426">
    <property type="entry name" value="ADH_Ceratitis-type"/>
</dbReference>
<dbReference type="InterPro" id="IPR036291">
    <property type="entry name" value="NAD(P)-bd_dom_sf"/>
</dbReference>
<dbReference type="InterPro" id="IPR020904">
    <property type="entry name" value="Sc_DH/Rdtase_CS"/>
</dbReference>
<dbReference type="InterPro" id="IPR002347">
    <property type="entry name" value="SDR_fam"/>
</dbReference>
<dbReference type="PANTHER" id="PTHR44229">
    <property type="entry name" value="15-HYDROXYPROSTAGLANDIN DEHYDROGENASE [NAD(+)]"/>
    <property type="match status" value="1"/>
</dbReference>
<dbReference type="PANTHER" id="PTHR44229:SF8">
    <property type="entry name" value="ALCOHOL DEHYDROGENASE-RELATED"/>
    <property type="match status" value="1"/>
</dbReference>
<dbReference type="Pfam" id="PF00106">
    <property type="entry name" value="adh_short"/>
    <property type="match status" value="1"/>
</dbReference>
<dbReference type="PRINTS" id="PR01169">
    <property type="entry name" value="CERATITISADH"/>
</dbReference>
<dbReference type="PRINTS" id="PR01167">
    <property type="entry name" value="INSADHFAMILY"/>
</dbReference>
<dbReference type="PRINTS" id="PR00080">
    <property type="entry name" value="SDRFAMILY"/>
</dbReference>
<dbReference type="SUPFAM" id="SSF51735">
    <property type="entry name" value="NAD(P)-binding Rossmann-fold domains"/>
    <property type="match status" value="1"/>
</dbReference>
<dbReference type="PROSITE" id="PS00061">
    <property type="entry name" value="ADH_SHORT"/>
    <property type="match status" value="1"/>
</dbReference>
<protein>
    <recommendedName>
        <fullName>Alcohol dehydrogenase 2</fullName>
        <ecNumber>1.1.1.1</ecNumber>
    </recommendedName>
</protein>
<organism>
    <name type="scientific">Ceratitis capitata</name>
    <name type="common">Mediterranean fruit fly</name>
    <name type="synonym">Tephritis capitata</name>
    <dbReference type="NCBI Taxonomy" id="7213"/>
    <lineage>
        <taxon>Eukaryota</taxon>
        <taxon>Metazoa</taxon>
        <taxon>Ecdysozoa</taxon>
        <taxon>Arthropoda</taxon>
        <taxon>Hexapoda</taxon>
        <taxon>Insecta</taxon>
        <taxon>Pterygota</taxon>
        <taxon>Neoptera</taxon>
        <taxon>Endopterygota</taxon>
        <taxon>Diptera</taxon>
        <taxon>Brachycera</taxon>
        <taxon>Muscomorpha</taxon>
        <taxon>Tephritoidea</taxon>
        <taxon>Tephritidae</taxon>
        <taxon>Ceratitis</taxon>
        <taxon>Ceratitis</taxon>
    </lineage>
</organism>
<name>ADH2_CERCA</name>
<accession>P48815</accession>
<feature type="chain" id="PRO_0000054449" description="Alcohol dehydrogenase 2">
    <location>
        <begin position="1"/>
        <end position="258"/>
    </location>
</feature>
<feature type="active site" description="Proton acceptor" evidence="2">
    <location>
        <position position="150"/>
    </location>
</feature>
<feature type="binding site" evidence="1">
    <location>
        <begin position="9"/>
        <end position="33"/>
    </location>
    <ligand>
        <name>NAD(+)</name>
        <dbReference type="ChEBI" id="CHEBI:57540"/>
    </ligand>
</feature>
<feature type="binding site" evidence="1">
    <location>
        <position position="137"/>
    </location>
    <ligand>
        <name>substrate</name>
    </ligand>
</feature>
<reference key="1">
    <citation type="journal article" date="2000" name="Mol. Gen. Genet.">
        <title>Acquisition of a potential marker for insect transformation: isolation of a novel alcohol dehydrogenase gene from Bactrocera oleae by functional complementation in yeast.</title>
        <authorList>
            <person name="Benos P."/>
            <person name="Tavernarakis N."/>
            <person name="Brogna S."/>
            <person name="Thireos G."/>
            <person name="Savakis C."/>
        </authorList>
    </citation>
    <scope>NUCLEOTIDE SEQUENCE [GENOMIC DNA]</scope>
    <source>
        <strain>Benakeion</strain>
    </source>
</reference>
<sequence length="258" mass="27936">MGLSGKNVIFVGGLGFIGYEACKQLMAKNMASFFVFDVLDKPENIKALQALNPKTKVYYTKFDITSKQSIKSALADVVAKVKYIDALINGAGILTDPNVELTMNINLIGLINTTLEGLPLMDKNKQGRGGVIVNIASVLGLEPCPPAAVYCASKFGVMGFSRSIGDPYYYNITGVAVVTFCPGLTETPLKNNIGSKYTFEYSKKISEELNSTKTQKPEVCGAHLAQVVESHENGGIYISNQGTLAKVTPTVYWQPTYH</sequence>
<evidence type="ECO:0000250" key="1"/>
<evidence type="ECO:0000255" key="2">
    <source>
        <dbReference type="PROSITE-ProRule" id="PRU10001"/>
    </source>
</evidence>
<evidence type="ECO:0000305" key="3"/>
<gene>
    <name type="primary">ADH2</name>
</gene>